<reference key="1">
    <citation type="journal article" date="2004" name="J. Mol. Microbiol. Biotechnol.">
        <title>The complete genome sequence of Bacillus licheniformis DSM13, an organism with great industrial potential.</title>
        <authorList>
            <person name="Veith B."/>
            <person name="Herzberg C."/>
            <person name="Steckel S."/>
            <person name="Feesche J."/>
            <person name="Maurer K.H."/>
            <person name="Ehrenreich P."/>
            <person name="Baeumer S."/>
            <person name="Henne A."/>
            <person name="Liesegang H."/>
            <person name="Merkl R."/>
            <person name="Ehrenreich A."/>
            <person name="Gottschalk G."/>
        </authorList>
    </citation>
    <scope>NUCLEOTIDE SEQUENCE [LARGE SCALE GENOMIC DNA]</scope>
    <source>
        <strain>ATCC 14580 / DSM 13 / JCM 2505 / CCUG 7422 / NBRC 12200 / NCIMB 9375 / NCTC 10341 / NRRL NRS-1264 / Gibson 46</strain>
    </source>
</reference>
<reference key="2">
    <citation type="journal article" date="2004" name="Genome Biol.">
        <title>Complete genome sequence of the industrial bacterium Bacillus licheniformis and comparisons with closely related Bacillus species.</title>
        <authorList>
            <person name="Rey M.W."/>
            <person name="Ramaiya P."/>
            <person name="Nelson B.A."/>
            <person name="Brody-Karpin S.D."/>
            <person name="Zaretsky E.J."/>
            <person name="Tang M."/>
            <person name="Lopez de Leon A."/>
            <person name="Xiang H."/>
            <person name="Gusti V."/>
            <person name="Clausen I.G."/>
            <person name="Olsen P.B."/>
            <person name="Rasmussen M.D."/>
            <person name="Andersen J.T."/>
            <person name="Joergensen P.L."/>
            <person name="Larsen T.S."/>
            <person name="Sorokin A."/>
            <person name="Bolotin A."/>
            <person name="Lapidus A."/>
            <person name="Galleron N."/>
            <person name="Ehrlich S.D."/>
            <person name="Berka R.M."/>
        </authorList>
    </citation>
    <scope>NUCLEOTIDE SEQUENCE [LARGE SCALE GENOMIC DNA]</scope>
    <source>
        <strain>ATCC 14580 / DSM 13 / JCM 2505 / CCUG 7422 / NBRC 12200 / NCIMB 9375 / NCTC 10341 / NRRL NRS-1264 / Gibson 46</strain>
    </source>
</reference>
<feature type="chain" id="PRO_0000178127" description="dITP/XTP pyrophosphatase">
    <location>
        <begin position="1"/>
        <end position="196"/>
    </location>
</feature>
<feature type="active site" description="Proton acceptor" evidence="1">
    <location>
        <position position="70"/>
    </location>
</feature>
<feature type="binding site" evidence="1">
    <location>
        <begin position="8"/>
        <end position="13"/>
    </location>
    <ligand>
        <name>substrate</name>
    </ligand>
</feature>
<feature type="binding site" evidence="1">
    <location>
        <position position="41"/>
    </location>
    <ligand>
        <name>Mg(2+)</name>
        <dbReference type="ChEBI" id="CHEBI:18420"/>
    </ligand>
</feature>
<feature type="binding site" evidence="1">
    <location>
        <position position="70"/>
    </location>
    <ligand>
        <name>Mg(2+)</name>
        <dbReference type="ChEBI" id="CHEBI:18420"/>
    </ligand>
</feature>
<feature type="binding site" evidence="1">
    <location>
        <position position="71"/>
    </location>
    <ligand>
        <name>substrate</name>
    </ligand>
</feature>
<feature type="binding site" evidence="1">
    <location>
        <begin position="153"/>
        <end position="156"/>
    </location>
    <ligand>
        <name>substrate</name>
    </ligand>
</feature>
<feature type="binding site" evidence="1">
    <location>
        <position position="176"/>
    </location>
    <ligand>
        <name>substrate</name>
    </ligand>
</feature>
<feature type="binding site" evidence="1">
    <location>
        <begin position="181"/>
        <end position="182"/>
    </location>
    <ligand>
        <name>substrate</name>
    </ligand>
</feature>
<accession>Q65GG3</accession>
<accession>Q62RX0</accession>
<gene>
    <name type="ordered locus">BLi02984</name>
    <name type="ordered locus">BL00311</name>
</gene>
<name>IXTPA_BACLD</name>
<organism>
    <name type="scientific">Bacillus licheniformis (strain ATCC 14580 / DSM 13 / JCM 2505 / CCUG 7422 / NBRC 12200 / NCIMB 9375 / NCTC 10341 / NRRL NRS-1264 / Gibson 46)</name>
    <dbReference type="NCBI Taxonomy" id="279010"/>
    <lineage>
        <taxon>Bacteria</taxon>
        <taxon>Bacillati</taxon>
        <taxon>Bacillota</taxon>
        <taxon>Bacilli</taxon>
        <taxon>Bacillales</taxon>
        <taxon>Bacillaceae</taxon>
        <taxon>Bacillus</taxon>
    </lineage>
</organism>
<keyword id="KW-0378">Hydrolase</keyword>
<keyword id="KW-0460">Magnesium</keyword>
<keyword id="KW-0479">Metal-binding</keyword>
<keyword id="KW-0546">Nucleotide metabolism</keyword>
<keyword id="KW-0547">Nucleotide-binding</keyword>
<keyword id="KW-1185">Reference proteome</keyword>
<proteinExistence type="inferred from homology"/>
<comment type="function">
    <text evidence="1">Pyrophosphatase that catalyzes the hydrolysis of nucleoside triphosphates to their monophosphate derivatives, with a high preference for the non-canonical purine nucleotides XTP (xanthosine triphosphate), dITP (deoxyinosine triphosphate) and ITP. Seems to function as a house-cleaning enzyme that removes non-canonical purine nucleotides from the nucleotide pool, thus preventing their incorporation into DNA/RNA and avoiding chromosomal lesions.</text>
</comment>
<comment type="catalytic activity">
    <reaction evidence="1">
        <text>XTP + H2O = XMP + diphosphate + H(+)</text>
        <dbReference type="Rhea" id="RHEA:28610"/>
        <dbReference type="ChEBI" id="CHEBI:15377"/>
        <dbReference type="ChEBI" id="CHEBI:15378"/>
        <dbReference type="ChEBI" id="CHEBI:33019"/>
        <dbReference type="ChEBI" id="CHEBI:57464"/>
        <dbReference type="ChEBI" id="CHEBI:61314"/>
        <dbReference type="EC" id="3.6.1.66"/>
    </reaction>
</comment>
<comment type="catalytic activity">
    <reaction evidence="1">
        <text>dITP + H2O = dIMP + diphosphate + H(+)</text>
        <dbReference type="Rhea" id="RHEA:28342"/>
        <dbReference type="ChEBI" id="CHEBI:15377"/>
        <dbReference type="ChEBI" id="CHEBI:15378"/>
        <dbReference type="ChEBI" id="CHEBI:33019"/>
        <dbReference type="ChEBI" id="CHEBI:61194"/>
        <dbReference type="ChEBI" id="CHEBI:61382"/>
        <dbReference type="EC" id="3.6.1.66"/>
    </reaction>
</comment>
<comment type="catalytic activity">
    <reaction evidence="1">
        <text>ITP + H2O = IMP + diphosphate + H(+)</text>
        <dbReference type="Rhea" id="RHEA:29399"/>
        <dbReference type="ChEBI" id="CHEBI:15377"/>
        <dbReference type="ChEBI" id="CHEBI:15378"/>
        <dbReference type="ChEBI" id="CHEBI:33019"/>
        <dbReference type="ChEBI" id="CHEBI:58053"/>
        <dbReference type="ChEBI" id="CHEBI:61402"/>
        <dbReference type="EC" id="3.6.1.66"/>
    </reaction>
</comment>
<comment type="cofactor">
    <cofactor evidence="1">
        <name>Mg(2+)</name>
        <dbReference type="ChEBI" id="CHEBI:18420"/>
    </cofactor>
    <text evidence="1">Binds 1 Mg(2+) ion per subunit.</text>
</comment>
<comment type="subunit">
    <text evidence="1">Homodimer.</text>
</comment>
<comment type="similarity">
    <text evidence="1">Belongs to the HAM1 NTPase family.</text>
</comment>
<sequence length="196" mass="21512">MKEVIIATKNEGKVREFKAMLEPRGYDVKSLLDIGYTPEIEETGQTFEENAVIKAETISKETGKIVIADDSGLSVDYLGGSPGVYSARYAGEEKNDLANLKKLLKELEGVEKEDRSARFRCALAICIPGQETKTVEGSVEGYITEEPRGTNGFGYDPVFLVKDKDQTMAELSSGEKNKISHRAEALKKLSALLDQA</sequence>
<protein>
    <recommendedName>
        <fullName evidence="1">dITP/XTP pyrophosphatase</fullName>
        <ecNumber evidence="1">3.6.1.66</ecNumber>
    </recommendedName>
    <alternativeName>
        <fullName evidence="1">Non-canonical purine NTP pyrophosphatase</fullName>
    </alternativeName>
    <alternativeName>
        <fullName evidence="1">Non-standard purine NTP pyrophosphatase</fullName>
    </alternativeName>
    <alternativeName>
        <fullName evidence="1">Nucleoside-triphosphate diphosphatase</fullName>
    </alternativeName>
    <alternativeName>
        <fullName evidence="1">Nucleoside-triphosphate pyrophosphatase</fullName>
        <shortName evidence="1">NTPase</shortName>
    </alternativeName>
</protein>
<evidence type="ECO:0000255" key="1">
    <source>
        <dbReference type="HAMAP-Rule" id="MF_01405"/>
    </source>
</evidence>
<dbReference type="EC" id="3.6.1.66" evidence="1"/>
<dbReference type="EMBL" id="AE017333">
    <property type="protein sequence ID" value="AAU41851.1"/>
    <property type="molecule type" value="Genomic_DNA"/>
</dbReference>
<dbReference type="EMBL" id="CP000002">
    <property type="protein sequence ID" value="AAU24490.1"/>
    <property type="molecule type" value="Genomic_DNA"/>
</dbReference>
<dbReference type="RefSeq" id="WP_009329329.1">
    <property type="nucleotide sequence ID" value="NC_006322.1"/>
</dbReference>
<dbReference type="SMR" id="Q65GG3"/>
<dbReference type="STRING" id="279010.BL00311"/>
<dbReference type="KEGG" id="bld:BLi02984"/>
<dbReference type="KEGG" id="bli:BL00311"/>
<dbReference type="eggNOG" id="COG0127">
    <property type="taxonomic scope" value="Bacteria"/>
</dbReference>
<dbReference type="HOGENOM" id="CLU_082080_0_2_9"/>
<dbReference type="Proteomes" id="UP000000606">
    <property type="component" value="Chromosome"/>
</dbReference>
<dbReference type="GO" id="GO:0005829">
    <property type="term" value="C:cytosol"/>
    <property type="evidence" value="ECO:0007669"/>
    <property type="project" value="TreeGrafter"/>
</dbReference>
<dbReference type="GO" id="GO:0035870">
    <property type="term" value="F:dITP diphosphatase activity"/>
    <property type="evidence" value="ECO:0007669"/>
    <property type="project" value="RHEA"/>
</dbReference>
<dbReference type="GO" id="GO:0036220">
    <property type="term" value="F:ITP diphosphatase activity"/>
    <property type="evidence" value="ECO:0007669"/>
    <property type="project" value="UniProtKB-EC"/>
</dbReference>
<dbReference type="GO" id="GO:0046872">
    <property type="term" value="F:metal ion binding"/>
    <property type="evidence" value="ECO:0007669"/>
    <property type="project" value="UniProtKB-KW"/>
</dbReference>
<dbReference type="GO" id="GO:0000166">
    <property type="term" value="F:nucleotide binding"/>
    <property type="evidence" value="ECO:0007669"/>
    <property type="project" value="UniProtKB-KW"/>
</dbReference>
<dbReference type="GO" id="GO:0017111">
    <property type="term" value="F:ribonucleoside triphosphate phosphatase activity"/>
    <property type="evidence" value="ECO:0007669"/>
    <property type="project" value="InterPro"/>
</dbReference>
<dbReference type="GO" id="GO:0036222">
    <property type="term" value="F:XTP diphosphatase activity"/>
    <property type="evidence" value="ECO:0007669"/>
    <property type="project" value="RHEA"/>
</dbReference>
<dbReference type="GO" id="GO:0009117">
    <property type="term" value="P:nucleotide metabolic process"/>
    <property type="evidence" value="ECO:0007669"/>
    <property type="project" value="UniProtKB-KW"/>
</dbReference>
<dbReference type="GO" id="GO:0009146">
    <property type="term" value="P:purine nucleoside triphosphate catabolic process"/>
    <property type="evidence" value="ECO:0007669"/>
    <property type="project" value="UniProtKB-UniRule"/>
</dbReference>
<dbReference type="CDD" id="cd00515">
    <property type="entry name" value="HAM1"/>
    <property type="match status" value="1"/>
</dbReference>
<dbReference type="FunFam" id="3.90.950.10:FF:000001">
    <property type="entry name" value="dITP/XTP pyrophosphatase"/>
    <property type="match status" value="1"/>
</dbReference>
<dbReference type="Gene3D" id="3.90.950.10">
    <property type="match status" value="1"/>
</dbReference>
<dbReference type="HAMAP" id="MF_01405">
    <property type="entry name" value="Non_canon_purine_NTPase"/>
    <property type="match status" value="1"/>
</dbReference>
<dbReference type="InterPro" id="IPR020922">
    <property type="entry name" value="dITP/XTP_pyrophosphatase"/>
</dbReference>
<dbReference type="InterPro" id="IPR029001">
    <property type="entry name" value="ITPase-like_fam"/>
</dbReference>
<dbReference type="InterPro" id="IPR002637">
    <property type="entry name" value="RdgB/HAM1"/>
</dbReference>
<dbReference type="NCBIfam" id="NF011397">
    <property type="entry name" value="PRK14822.1"/>
    <property type="match status" value="1"/>
</dbReference>
<dbReference type="NCBIfam" id="TIGR00042">
    <property type="entry name" value="RdgB/HAM1 family non-canonical purine NTP pyrophosphatase"/>
    <property type="match status" value="1"/>
</dbReference>
<dbReference type="PANTHER" id="PTHR11067:SF9">
    <property type="entry name" value="INOSINE TRIPHOSPHATE PYROPHOSPHATASE"/>
    <property type="match status" value="1"/>
</dbReference>
<dbReference type="PANTHER" id="PTHR11067">
    <property type="entry name" value="INOSINE TRIPHOSPHATE PYROPHOSPHATASE/HAM1 PROTEIN"/>
    <property type="match status" value="1"/>
</dbReference>
<dbReference type="Pfam" id="PF01725">
    <property type="entry name" value="Ham1p_like"/>
    <property type="match status" value="1"/>
</dbReference>
<dbReference type="SUPFAM" id="SSF52972">
    <property type="entry name" value="ITPase-like"/>
    <property type="match status" value="1"/>
</dbReference>